<accession>Q3IG75</accession>
<reference key="1">
    <citation type="journal article" date="2005" name="Genome Res.">
        <title>Coping with cold: the genome of the versatile marine Antarctica bacterium Pseudoalteromonas haloplanktis TAC125.</title>
        <authorList>
            <person name="Medigue C."/>
            <person name="Krin E."/>
            <person name="Pascal G."/>
            <person name="Barbe V."/>
            <person name="Bernsel A."/>
            <person name="Bertin P.N."/>
            <person name="Cheung F."/>
            <person name="Cruveiller S."/>
            <person name="D'Amico S."/>
            <person name="Duilio A."/>
            <person name="Fang G."/>
            <person name="Feller G."/>
            <person name="Ho C."/>
            <person name="Mangenot S."/>
            <person name="Marino G."/>
            <person name="Nilsson J."/>
            <person name="Parrilli E."/>
            <person name="Rocha E.P.C."/>
            <person name="Rouy Z."/>
            <person name="Sekowska A."/>
            <person name="Tutino M.L."/>
            <person name="Vallenet D."/>
            <person name="von Heijne G."/>
            <person name="Danchin A."/>
        </authorList>
    </citation>
    <scope>NUCLEOTIDE SEQUENCE [LARGE SCALE GENOMIC DNA]</scope>
    <source>
        <strain>TAC 125</strain>
    </source>
</reference>
<sequence>MENWREISEDIVSSLLEDGSDPEILYEVEHHFVCEDFPKLEQAALAAFKLGYDVEEPAELELEDGAKIWSFDIVVESELDVDVIMEDVDKLAALAVECEVEYDGWGTYFQE</sequence>
<keyword id="KW-0963">Cytoplasm</keyword>
<keyword id="KW-1185">Reference proteome</keyword>
<protein>
    <recommendedName>
        <fullName evidence="1">Regulator of ribonuclease activity B</fullName>
    </recommendedName>
</protein>
<gene>
    <name evidence="1" type="primary">rraB</name>
    <name type="ordered locus">PSHAa2583</name>
</gene>
<feature type="chain" id="PRO_0000404313" description="Regulator of ribonuclease activity B">
    <location>
        <begin position="1"/>
        <end position="111"/>
    </location>
</feature>
<proteinExistence type="inferred from homology"/>
<organism>
    <name type="scientific">Pseudoalteromonas translucida (strain TAC 125)</name>
    <dbReference type="NCBI Taxonomy" id="326442"/>
    <lineage>
        <taxon>Bacteria</taxon>
        <taxon>Pseudomonadati</taxon>
        <taxon>Pseudomonadota</taxon>
        <taxon>Gammaproteobacteria</taxon>
        <taxon>Alteromonadales</taxon>
        <taxon>Pseudoalteromonadaceae</taxon>
        <taxon>Pseudoalteromonas</taxon>
    </lineage>
</organism>
<evidence type="ECO:0000255" key="1">
    <source>
        <dbReference type="HAMAP-Rule" id="MF_01888"/>
    </source>
</evidence>
<comment type="function">
    <text evidence="1">Globally modulates RNA abundance by binding to RNase E (Rne) and regulating its endonucleolytic activity. Can modulate Rne action in a substrate-dependent manner by altering the composition of the degradosome.</text>
</comment>
<comment type="subunit">
    <text evidence="1">Interacts with the C-terminal region of Rne.</text>
</comment>
<comment type="subcellular location">
    <subcellularLocation>
        <location evidence="1">Cytoplasm</location>
    </subcellularLocation>
</comment>
<comment type="similarity">
    <text evidence="1">Belongs to the RraB family.</text>
</comment>
<dbReference type="EMBL" id="CR954246">
    <property type="protein sequence ID" value="CAI87631.1"/>
    <property type="molecule type" value="Genomic_DNA"/>
</dbReference>
<dbReference type="SMR" id="Q3IG75"/>
<dbReference type="STRING" id="326442.PSHAa2583"/>
<dbReference type="KEGG" id="pha:PSHAa2583"/>
<dbReference type="eggNOG" id="COG3076">
    <property type="taxonomic scope" value="Bacteria"/>
</dbReference>
<dbReference type="HOGENOM" id="CLU_128640_0_0_6"/>
<dbReference type="BioCyc" id="PHAL326442:PSHA_RS12715-MONOMER"/>
<dbReference type="Proteomes" id="UP000006843">
    <property type="component" value="Chromosome I"/>
</dbReference>
<dbReference type="GO" id="GO:0005737">
    <property type="term" value="C:cytoplasm"/>
    <property type="evidence" value="ECO:0007669"/>
    <property type="project" value="UniProtKB-SubCell"/>
</dbReference>
<dbReference type="GO" id="GO:0060698">
    <property type="term" value="F:endoribonuclease inhibitor activity"/>
    <property type="evidence" value="ECO:0007669"/>
    <property type="project" value="UniProtKB-UniRule"/>
</dbReference>
<dbReference type="GO" id="GO:0019899">
    <property type="term" value="F:enzyme binding"/>
    <property type="evidence" value="ECO:0007669"/>
    <property type="project" value="UniProtKB-UniRule"/>
</dbReference>
<dbReference type="Gene3D" id="3.30.70.970">
    <property type="entry name" value="RraB-like"/>
    <property type="match status" value="1"/>
</dbReference>
<dbReference type="HAMAP" id="MF_01888">
    <property type="entry name" value="RraB"/>
    <property type="match status" value="1"/>
</dbReference>
<dbReference type="InterPro" id="IPR016716">
    <property type="entry name" value="RraB"/>
</dbReference>
<dbReference type="InterPro" id="IPR036701">
    <property type="entry name" value="RraB-like_sf"/>
</dbReference>
<dbReference type="InterPro" id="IPR009671">
    <property type="entry name" value="RraB_dom"/>
</dbReference>
<dbReference type="NCBIfam" id="NF008393">
    <property type="entry name" value="PRK11191.1"/>
    <property type="match status" value="1"/>
</dbReference>
<dbReference type="Pfam" id="PF06877">
    <property type="entry name" value="RraB"/>
    <property type="match status" value="1"/>
</dbReference>
<dbReference type="PIRSF" id="PIRSF018193">
    <property type="entry name" value="UCP018193"/>
    <property type="match status" value="1"/>
</dbReference>
<dbReference type="SUPFAM" id="SSF89946">
    <property type="entry name" value="Hypothetical protein VC0424"/>
    <property type="match status" value="1"/>
</dbReference>
<name>RRAB_PSET1</name>